<gene>
    <name evidence="1" type="primary">hprK</name>
    <name type="ordered locus">XF_1406</name>
</gene>
<comment type="function">
    <text evidence="1">Catalyzes the ATP- as well as the pyrophosphate-dependent phosphorylation of a specific serine residue in HPr, a phosphocarrier protein of the phosphoenolpyruvate-dependent sugar phosphotransferase system (PTS). HprK/P also catalyzes the pyrophosphate-producing, inorganic phosphate-dependent dephosphorylation (phosphorolysis) of seryl-phosphorylated HPr (P-Ser-HPr).</text>
</comment>
<comment type="catalytic activity">
    <reaction evidence="1">
        <text>[HPr protein]-L-serine + ATP = [HPr protein]-O-phospho-L-serine + ADP + H(+)</text>
        <dbReference type="Rhea" id="RHEA:46600"/>
        <dbReference type="Rhea" id="RHEA-COMP:11602"/>
        <dbReference type="Rhea" id="RHEA-COMP:11603"/>
        <dbReference type="ChEBI" id="CHEBI:15378"/>
        <dbReference type="ChEBI" id="CHEBI:29999"/>
        <dbReference type="ChEBI" id="CHEBI:30616"/>
        <dbReference type="ChEBI" id="CHEBI:83421"/>
        <dbReference type="ChEBI" id="CHEBI:456216"/>
    </reaction>
</comment>
<comment type="catalytic activity">
    <reaction evidence="1">
        <text>[HPr protein]-O-phospho-L-serine + phosphate + H(+) = [HPr protein]-L-serine + diphosphate</text>
        <dbReference type="Rhea" id="RHEA:46604"/>
        <dbReference type="Rhea" id="RHEA-COMP:11602"/>
        <dbReference type="Rhea" id="RHEA-COMP:11603"/>
        <dbReference type="ChEBI" id="CHEBI:15378"/>
        <dbReference type="ChEBI" id="CHEBI:29999"/>
        <dbReference type="ChEBI" id="CHEBI:33019"/>
        <dbReference type="ChEBI" id="CHEBI:43474"/>
        <dbReference type="ChEBI" id="CHEBI:83421"/>
    </reaction>
</comment>
<comment type="cofactor">
    <cofactor evidence="1">
        <name>Mg(2+)</name>
        <dbReference type="ChEBI" id="CHEBI:18420"/>
    </cofactor>
</comment>
<comment type="subunit">
    <text evidence="1">Homohexamer.</text>
</comment>
<comment type="domain">
    <text evidence="1">The Walker A ATP-binding motif also binds Pi and PPi.</text>
</comment>
<comment type="miscellaneous">
    <text evidence="1">Both phosphorylation and phosphorolysis are carried out by the same active site and suggest a common mechanism for both reactions.</text>
</comment>
<comment type="similarity">
    <text evidence="1">Belongs to the HPrK/P family.</text>
</comment>
<name>HPRK_XYLFA</name>
<feature type="chain" id="PRO_0000059008" description="HPr kinase/phosphorylase">
    <location>
        <begin position="1"/>
        <end position="316"/>
    </location>
</feature>
<feature type="region of interest" description="Important for the catalytic mechanism of both phosphorylation and dephosphorylation" evidence="1">
    <location>
        <begin position="206"/>
        <end position="215"/>
    </location>
</feature>
<feature type="region of interest" description="Important for the catalytic mechanism of dephosphorylation" evidence="1">
    <location>
        <begin position="272"/>
        <end position="277"/>
    </location>
</feature>
<feature type="active site" evidence="1">
    <location>
        <position position="143"/>
    </location>
</feature>
<feature type="active site" evidence="1">
    <location>
        <position position="164"/>
    </location>
</feature>
<feature type="active site" description="Proton acceptor; for phosphorylation activity. Proton donor; for dephosphorylation activity" evidence="1">
    <location>
        <position position="182"/>
    </location>
</feature>
<feature type="active site" evidence="1">
    <location>
        <position position="251"/>
    </location>
</feature>
<feature type="binding site" evidence="1">
    <location>
        <begin position="158"/>
        <end position="165"/>
    </location>
    <ligand>
        <name>ATP</name>
        <dbReference type="ChEBI" id="CHEBI:30616"/>
    </ligand>
</feature>
<feature type="binding site" evidence="1">
    <location>
        <position position="165"/>
    </location>
    <ligand>
        <name>Mg(2+)</name>
        <dbReference type="ChEBI" id="CHEBI:18420"/>
    </ligand>
</feature>
<feature type="binding site" evidence="1">
    <location>
        <position position="207"/>
    </location>
    <ligand>
        <name>Mg(2+)</name>
        <dbReference type="ChEBI" id="CHEBI:18420"/>
    </ligand>
</feature>
<protein>
    <recommendedName>
        <fullName evidence="1">HPr kinase/phosphorylase</fullName>
        <shortName evidence="1">HPrK/P</shortName>
        <ecNumber evidence="1">2.7.11.-</ecNumber>
        <ecNumber evidence="1">2.7.4.-</ecNumber>
    </recommendedName>
    <alternativeName>
        <fullName evidence="1">HPr(Ser) kinase/phosphorylase</fullName>
    </alternativeName>
</protein>
<organism>
    <name type="scientific">Xylella fastidiosa (strain 9a5c)</name>
    <dbReference type="NCBI Taxonomy" id="160492"/>
    <lineage>
        <taxon>Bacteria</taxon>
        <taxon>Pseudomonadati</taxon>
        <taxon>Pseudomonadota</taxon>
        <taxon>Gammaproteobacteria</taxon>
        <taxon>Lysobacterales</taxon>
        <taxon>Lysobacteraceae</taxon>
        <taxon>Xylella</taxon>
    </lineage>
</organism>
<accession>Q9PDH3</accession>
<dbReference type="EC" id="2.7.11.-" evidence="1"/>
<dbReference type="EC" id="2.7.4.-" evidence="1"/>
<dbReference type="EMBL" id="AE003849">
    <property type="protein sequence ID" value="AAF84215.1"/>
    <property type="molecule type" value="Genomic_DNA"/>
</dbReference>
<dbReference type="PIR" id="B82687">
    <property type="entry name" value="B82687"/>
</dbReference>
<dbReference type="RefSeq" id="WP_004083779.1">
    <property type="nucleotide sequence ID" value="NC_002488.3"/>
</dbReference>
<dbReference type="SMR" id="Q9PDH3"/>
<dbReference type="STRING" id="160492.XF_1406"/>
<dbReference type="KEGG" id="xfa:XF_1406"/>
<dbReference type="eggNOG" id="COG1493">
    <property type="taxonomic scope" value="Bacteria"/>
</dbReference>
<dbReference type="HOGENOM" id="CLU_052030_0_2_6"/>
<dbReference type="Proteomes" id="UP000000812">
    <property type="component" value="Chromosome"/>
</dbReference>
<dbReference type="GO" id="GO:0005524">
    <property type="term" value="F:ATP binding"/>
    <property type="evidence" value="ECO:0007669"/>
    <property type="project" value="UniProtKB-UniRule"/>
</dbReference>
<dbReference type="GO" id="GO:0000287">
    <property type="term" value="F:magnesium ion binding"/>
    <property type="evidence" value="ECO:0007669"/>
    <property type="project" value="UniProtKB-UniRule"/>
</dbReference>
<dbReference type="GO" id="GO:0000155">
    <property type="term" value="F:phosphorelay sensor kinase activity"/>
    <property type="evidence" value="ECO:0007669"/>
    <property type="project" value="InterPro"/>
</dbReference>
<dbReference type="GO" id="GO:0004674">
    <property type="term" value="F:protein serine/threonine kinase activity"/>
    <property type="evidence" value="ECO:0007669"/>
    <property type="project" value="UniProtKB-KW"/>
</dbReference>
<dbReference type="GO" id="GO:0004712">
    <property type="term" value="F:protein serine/threonine/tyrosine kinase activity"/>
    <property type="evidence" value="ECO:0007669"/>
    <property type="project" value="UniProtKB-UniRule"/>
</dbReference>
<dbReference type="GO" id="GO:0006109">
    <property type="term" value="P:regulation of carbohydrate metabolic process"/>
    <property type="evidence" value="ECO:0007669"/>
    <property type="project" value="UniProtKB-UniRule"/>
</dbReference>
<dbReference type="CDD" id="cd01918">
    <property type="entry name" value="HprK_C"/>
    <property type="match status" value="1"/>
</dbReference>
<dbReference type="FunFam" id="3.40.50.300:FF:000174">
    <property type="entry name" value="HPr kinase/phosphorylase"/>
    <property type="match status" value="1"/>
</dbReference>
<dbReference type="Gene3D" id="3.40.1390.20">
    <property type="entry name" value="HprK N-terminal domain-like"/>
    <property type="match status" value="1"/>
</dbReference>
<dbReference type="Gene3D" id="3.40.50.300">
    <property type="entry name" value="P-loop containing nucleotide triphosphate hydrolases"/>
    <property type="match status" value="1"/>
</dbReference>
<dbReference type="HAMAP" id="MF_01249">
    <property type="entry name" value="HPr_kinase"/>
    <property type="match status" value="1"/>
</dbReference>
<dbReference type="InterPro" id="IPR003755">
    <property type="entry name" value="HPr(Ser)_kin/Pase"/>
</dbReference>
<dbReference type="InterPro" id="IPR011104">
    <property type="entry name" value="Hpr_kin/Pase_C"/>
</dbReference>
<dbReference type="InterPro" id="IPR011126">
    <property type="entry name" value="Hpr_kin/Pase_Hpr_N"/>
</dbReference>
<dbReference type="InterPro" id="IPR027417">
    <property type="entry name" value="P-loop_NTPase"/>
</dbReference>
<dbReference type="InterPro" id="IPR028979">
    <property type="entry name" value="Ser_kin/Pase_Hpr-like_N_sf"/>
</dbReference>
<dbReference type="NCBIfam" id="TIGR00679">
    <property type="entry name" value="hpr-ser"/>
    <property type="match status" value="1"/>
</dbReference>
<dbReference type="PANTHER" id="PTHR30305:SF1">
    <property type="entry name" value="HPR KINASE_PHOSPHORYLASE"/>
    <property type="match status" value="1"/>
</dbReference>
<dbReference type="PANTHER" id="PTHR30305">
    <property type="entry name" value="PROTEIN YJDM-RELATED"/>
    <property type="match status" value="1"/>
</dbReference>
<dbReference type="Pfam" id="PF07475">
    <property type="entry name" value="Hpr_kinase_C"/>
    <property type="match status" value="1"/>
</dbReference>
<dbReference type="Pfam" id="PF02603">
    <property type="entry name" value="Hpr_kinase_N"/>
    <property type="match status" value="1"/>
</dbReference>
<dbReference type="SUPFAM" id="SSF75138">
    <property type="entry name" value="HprK N-terminal domain-like"/>
    <property type="match status" value="1"/>
</dbReference>
<dbReference type="SUPFAM" id="SSF53795">
    <property type="entry name" value="PEP carboxykinase-like"/>
    <property type="match status" value="1"/>
</dbReference>
<reference key="1">
    <citation type="journal article" date="2000" name="Nature">
        <title>The genome sequence of the plant pathogen Xylella fastidiosa.</title>
        <authorList>
            <person name="Simpson A.J.G."/>
            <person name="Reinach F.C."/>
            <person name="Arruda P."/>
            <person name="Abreu F.A."/>
            <person name="Acencio M."/>
            <person name="Alvarenga R."/>
            <person name="Alves L.M.C."/>
            <person name="Araya J.E."/>
            <person name="Baia G.S."/>
            <person name="Baptista C.S."/>
            <person name="Barros M.H."/>
            <person name="Bonaccorsi E.D."/>
            <person name="Bordin S."/>
            <person name="Bove J.M."/>
            <person name="Briones M.R.S."/>
            <person name="Bueno M.R.P."/>
            <person name="Camargo A.A."/>
            <person name="Camargo L.E.A."/>
            <person name="Carraro D.M."/>
            <person name="Carrer H."/>
            <person name="Colauto N.B."/>
            <person name="Colombo C."/>
            <person name="Costa F.F."/>
            <person name="Costa M.C.R."/>
            <person name="Costa-Neto C.M."/>
            <person name="Coutinho L.L."/>
            <person name="Cristofani M."/>
            <person name="Dias-Neto E."/>
            <person name="Docena C."/>
            <person name="El-Dorry H."/>
            <person name="Facincani A.P."/>
            <person name="Ferreira A.J.S."/>
            <person name="Ferreira V.C.A."/>
            <person name="Ferro J.A."/>
            <person name="Fraga J.S."/>
            <person name="Franca S.C."/>
            <person name="Franco M.C."/>
            <person name="Frohme M."/>
            <person name="Furlan L.R."/>
            <person name="Garnier M."/>
            <person name="Goldman G.H."/>
            <person name="Goldman M.H.S."/>
            <person name="Gomes S.L."/>
            <person name="Gruber A."/>
            <person name="Ho P.L."/>
            <person name="Hoheisel J.D."/>
            <person name="Junqueira M.L."/>
            <person name="Kemper E.L."/>
            <person name="Kitajima J.P."/>
            <person name="Krieger J.E."/>
            <person name="Kuramae E.E."/>
            <person name="Laigret F."/>
            <person name="Lambais M.R."/>
            <person name="Leite L.C.C."/>
            <person name="Lemos E.G.M."/>
            <person name="Lemos M.V.F."/>
            <person name="Lopes S.A."/>
            <person name="Lopes C.R."/>
            <person name="Machado J.A."/>
            <person name="Machado M.A."/>
            <person name="Madeira A.M.B.N."/>
            <person name="Madeira H.M.F."/>
            <person name="Marino C.L."/>
            <person name="Marques M.V."/>
            <person name="Martins E.A.L."/>
            <person name="Martins E.M.F."/>
            <person name="Matsukuma A.Y."/>
            <person name="Menck C.F.M."/>
            <person name="Miracca E.C."/>
            <person name="Miyaki C.Y."/>
            <person name="Monteiro-Vitorello C.B."/>
            <person name="Moon D.H."/>
            <person name="Nagai M.A."/>
            <person name="Nascimento A.L.T.O."/>
            <person name="Netto L.E.S."/>
            <person name="Nhani A. Jr."/>
            <person name="Nobrega F.G."/>
            <person name="Nunes L.R."/>
            <person name="Oliveira M.A."/>
            <person name="de Oliveira M.C."/>
            <person name="de Oliveira R.C."/>
            <person name="Palmieri D.A."/>
            <person name="Paris A."/>
            <person name="Peixoto B.R."/>
            <person name="Pereira G.A.G."/>
            <person name="Pereira H.A. Jr."/>
            <person name="Pesquero J.B."/>
            <person name="Quaggio R.B."/>
            <person name="Roberto P.G."/>
            <person name="Rodrigues V."/>
            <person name="de Rosa A.J.M."/>
            <person name="de Rosa V.E. Jr."/>
            <person name="de Sa R.G."/>
            <person name="Santelli R.V."/>
            <person name="Sawasaki H.E."/>
            <person name="da Silva A.C.R."/>
            <person name="da Silva A.M."/>
            <person name="da Silva F.R."/>
            <person name="Silva W.A. Jr."/>
            <person name="da Silveira J.F."/>
            <person name="Silvestri M.L.Z."/>
            <person name="Siqueira W.J."/>
            <person name="de Souza A.A."/>
            <person name="de Souza A.P."/>
            <person name="Terenzi M.F."/>
            <person name="Truffi D."/>
            <person name="Tsai S.M."/>
            <person name="Tsuhako M.H."/>
            <person name="Vallada H."/>
            <person name="Van Sluys M.A."/>
            <person name="Verjovski-Almeida S."/>
            <person name="Vettore A.L."/>
            <person name="Zago M.A."/>
            <person name="Zatz M."/>
            <person name="Meidanis J."/>
            <person name="Setubal J.C."/>
        </authorList>
    </citation>
    <scope>NUCLEOTIDE SEQUENCE [LARGE SCALE GENOMIC DNA]</scope>
    <source>
        <strain>9a5c</strain>
    </source>
</reference>
<proteinExistence type="inferred from homology"/>
<evidence type="ECO:0000255" key="1">
    <source>
        <dbReference type="HAMAP-Rule" id="MF_01249"/>
    </source>
</evidence>
<sequence length="316" mass="35394">MNTSITARELFDLQRDRLSLRWIAGQQGEHRQIDSGDTRARRPSLAGYLNTIYPNKVQILGTEELTWLDSLEPNKRKETIEKIIQFQPLTLVISKNQSCPEDMRTAADNSQIPLWVSPKRGHELLNHLSYHLARILAPRATLHGVFMEIYSIGVLITGEAGSGKSELALELLSRGHRLVADDAPEFTQIAPDVLDGTCPEILQDLLEVRGLGVLNVRHMFGDTAIKKNKYLRLIVHLTKPITEPTPSGYERLTGDSGTRHVLDLDVPLITLPVMPGRNLAVLTEAATRLHILRTKGIDPATMFIARHSNLLERRPP</sequence>
<keyword id="KW-0067">ATP-binding</keyword>
<keyword id="KW-0418">Kinase</keyword>
<keyword id="KW-0460">Magnesium</keyword>
<keyword id="KW-0479">Metal-binding</keyword>
<keyword id="KW-0511">Multifunctional enzyme</keyword>
<keyword id="KW-0547">Nucleotide-binding</keyword>
<keyword id="KW-0723">Serine/threonine-protein kinase</keyword>
<keyword id="KW-0808">Transferase</keyword>